<name>ARNA_SODGM</name>
<keyword id="KW-0046">Antibiotic resistance</keyword>
<keyword id="KW-0441">Lipid A biosynthesis</keyword>
<keyword id="KW-0444">Lipid biosynthesis</keyword>
<keyword id="KW-0443">Lipid metabolism</keyword>
<keyword id="KW-0448">Lipopolysaccharide biosynthesis</keyword>
<keyword id="KW-0511">Multifunctional enzyme</keyword>
<keyword id="KW-0520">NAD</keyword>
<keyword id="KW-0560">Oxidoreductase</keyword>
<keyword id="KW-0808">Transferase</keyword>
<gene>
    <name evidence="1" type="primary">arnA</name>
    <name type="ordered locus">SG1843</name>
</gene>
<organism>
    <name type="scientific">Sodalis glossinidius (strain morsitans)</name>
    <dbReference type="NCBI Taxonomy" id="343509"/>
    <lineage>
        <taxon>Bacteria</taxon>
        <taxon>Pseudomonadati</taxon>
        <taxon>Pseudomonadota</taxon>
        <taxon>Gammaproteobacteria</taxon>
        <taxon>Enterobacterales</taxon>
        <taxon>Bruguierivoracaceae</taxon>
        <taxon>Sodalis</taxon>
    </lineage>
</organism>
<feature type="chain" id="PRO_0000281731" description="Bifunctional polymyxin resistance protein ArnA">
    <location>
        <begin position="1"/>
        <end position="660"/>
    </location>
</feature>
<feature type="region of interest" description="Formyltransferase ArnAFT">
    <location>
        <begin position="1"/>
        <end position="304"/>
    </location>
</feature>
<feature type="region of interest" description="Dehydrogenase ArnADH">
    <location>
        <begin position="314"/>
        <end position="660"/>
    </location>
</feature>
<feature type="active site" description="Proton donor; for formyltransferase activity" evidence="1">
    <location>
        <position position="104"/>
    </location>
</feature>
<feature type="active site" description="Proton acceptor; for decarboxylase activity" evidence="1">
    <location>
        <position position="434"/>
    </location>
</feature>
<feature type="active site" description="Proton donor; for decarboxylase activity" evidence="1">
    <location>
        <position position="619"/>
    </location>
</feature>
<feature type="binding site" evidence="1">
    <location>
        <position position="114"/>
    </location>
    <ligand>
        <name>(6R)-10-formyltetrahydrofolate</name>
        <dbReference type="ChEBI" id="CHEBI:195366"/>
    </ligand>
</feature>
<feature type="binding site" evidence="1">
    <location>
        <begin position="136"/>
        <end position="140"/>
    </location>
    <ligand>
        <name>(6R)-10-formyltetrahydrofolate</name>
        <dbReference type="ChEBI" id="CHEBI:195366"/>
    </ligand>
</feature>
<feature type="binding site" evidence="1">
    <location>
        <position position="347"/>
    </location>
    <ligand>
        <name>NAD(+)</name>
        <dbReference type="ChEBI" id="CHEBI:57540"/>
    </ligand>
</feature>
<feature type="binding site" evidence="1">
    <location>
        <begin position="368"/>
        <end position="369"/>
    </location>
    <ligand>
        <name>NAD(+)</name>
        <dbReference type="ChEBI" id="CHEBI:57540"/>
    </ligand>
</feature>
<feature type="binding site" evidence="1">
    <location>
        <position position="393"/>
    </location>
    <ligand>
        <name>UDP-alpha-D-glucuronate</name>
        <dbReference type="ChEBI" id="CHEBI:58052"/>
    </ligand>
</feature>
<feature type="binding site" evidence="1">
    <location>
        <position position="398"/>
    </location>
    <ligand>
        <name>UDP-alpha-D-glucuronate</name>
        <dbReference type="ChEBI" id="CHEBI:58052"/>
    </ligand>
</feature>
<feature type="binding site" evidence="1">
    <location>
        <begin position="432"/>
        <end position="433"/>
    </location>
    <ligand>
        <name>UDP-alpha-D-glucuronate</name>
        <dbReference type="ChEBI" id="CHEBI:58052"/>
    </ligand>
</feature>
<feature type="binding site" evidence="1">
    <location>
        <position position="460"/>
    </location>
    <ligand>
        <name>UDP-alpha-D-glucuronate</name>
        <dbReference type="ChEBI" id="CHEBI:58052"/>
    </ligand>
</feature>
<feature type="binding site" evidence="1">
    <location>
        <position position="492"/>
    </location>
    <ligand>
        <name>UDP-alpha-D-glucuronate</name>
        <dbReference type="ChEBI" id="CHEBI:58052"/>
    </ligand>
</feature>
<feature type="binding site" evidence="1">
    <location>
        <begin position="526"/>
        <end position="535"/>
    </location>
    <ligand>
        <name>UDP-alpha-D-glucuronate</name>
        <dbReference type="ChEBI" id="CHEBI:58052"/>
    </ligand>
</feature>
<feature type="binding site" evidence="1">
    <location>
        <position position="613"/>
    </location>
    <ligand>
        <name>UDP-alpha-D-glucuronate</name>
        <dbReference type="ChEBI" id="CHEBI:58052"/>
    </ligand>
</feature>
<feature type="site" description="Transition state stabilizer" evidence="1">
    <location>
        <position position="102"/>
    </location>
</feature>
<feature type="site" description="Raises pKa of active site His" evidence="1">
    <location>
        <position position="140"/>
    </location>
</feature>
<reference key="1">
    <citation type="journal article" date="2006" name="Genome Res.">
        <title>Massive genome erosion and functional adaptations provide insights into the symbiotic lifestyle of Sodalis glossinidius in the tsetse host.</title>
        <authorList>
            <person name="Toh H."/>
            <person name="Weiss B.L."/>
            <person name="Perkin S.A.H."/>
            <person name="Yamashita A."/>
            <person name="Oshima K."/>
            <person name="Hattori M."/>
            <person name="Aksoy S."/>
        </authorList>
    </citation>
    <scope>NUCLEOTIDE SEQUENCE [LARGE SCALE GENOMIC DNA]</scope>
    <source>
        <strain>morsitans</strain>
    </source>
</reference>
<evidence type="ECO:0000255" key="1">
    <source>
        <dbReference type="HAMAP-Rule" id="MF_01166"/>
    </source>
</evidence>
<comment type="function">
    <text evidence="1">Bifunctional enzyme that catalyzes the oxidative decarboxylation of UDP-glucuronic acid (UDP-GlcUA) to UDP-4-keto-arabinose (UDP-Ara4O) and the addition of a formyl group to UDP-4-amino-4-deoxy-L-arabinose (UDP-L-Ara4N) to form UDP-L-4-formamido-arabinose (UDP-L-Ara4FN). The modified arabinose is attached to lipid A and is required for resistance to polymyxin and cationic antimicrobial peptides.</text>
</comment>
<comment type="catalytic activity">
    <reaction evidence="1">
        <text>UDP-alpha-D-glucuronate + NAD(+) = UDP-beta-L-threo-pentopyranos-4-ulose + CO2 + NADH</text>
        <dbReference type="Rhea" id="RHEA:24702"/>
        <dbReference type="ChEBI" id="CHEBI:16526"/>
        <dbReference type="ChEBI" id="CHEBI:57540"/>
        <dbReference type="ChEBI" id="CHEBI:57945"/>
        <dbReference type="ChEBI" id="CHEBI:58052"/>
        <dbReference type="ChEBI" id="CHEBI:58710"/>
        <dbReference type="EC" id="1.1.1.305"/>
    </reaction>
</comment>
<comment type="catalytic activity">
    <reaction evidence="1">
        <text>UDP-4-amino-4-deoxy-beta-L-arabinose + (6R)-10-formyltetrahydrofolate = UDP-4-deoxy-4-formamido-beta-L-arabinose + (6S)-5,6,7,8-tetrahydrofolate + H(+)</text>
        <dbReference type="Rhea" id="RHEA:24706"/>
        <dbReference type="ChEBI" id="CHEBI:15378"/>
        <dbReference type="ChEBI" id="CHEBI:57453"/>
        <dbReference type="ChEBI" id="CHEBI:58708"/>
        <dbReference type="ChEBI" id="CHEBI:58709"/>
        <dbReference type="ChEBI" id="CHEBI:195366"/>
        <dbReference type="EC" id="2.1.2.13"/>
    </reaction>
</comment>
<comment type="pathway">
    <text evidence="1">Nucleotide-sugar biosynthesis; UDP-4-deoxy-4-formamido-beta-L-arabinose biosynthesis; UDP-4-deoxy-4-formamido-beta-L-arabinose from UDP-alpha-D-glucuronate: step 1/3.</text>
</comment>
<comment type="pathway">
    <text evidence="1">Nucleotide-sugar biosynthesis; UDP-4-deoxy-4-formamido-beta-L-arabinose biosynthesis; UDP-4-deoxy-4-formamido-beta-L-arabinose from UDP-alpha-D-glucuronate: step 3/3.</text>
</comment>
<comment type="pathway">
    <text evidence="1">Bacterial outer membrane biogenesis; lipopolysaccharide biosynthesis.</text>
</comment>
<comment type="subunit">
    <text evidence="1">Homohexamer, formed by a dimer of trimers.</text>
</comment>
<comment type="similarity">
    <text evidence="1">In the N-terminal section; belongs to the Fmt family. UDP-L-Ara4N formyltransferase subfamily.</text>
</comment>
<comment type="similarity">
    <text evidence="1">In the C-terminal section; belongs to the NAD(P)-dependent epimerase/dehydratase family. UDP-glucuronic acid decarboxylase subfamily.</text>
</comment>
<dbReference type="EC" id="2.1.2.13" evidence="1"/>
<dbReference type="EC" id="1.1.1.305" evidence="1"/>
<dbReference type="EMBL" id="AP008232">
    <property type="protein sequence ID" value="BAE75118.1"/>
    <property type="molecule type" value="Genomic_DNA"/>
</dbReference>
<dbReference type="RefSeq" id="WP_011411790.1">
    <property type="nucleotide sequence ID" value="NC_007712.1"/>
</dbReference>
<dbReference type="SMR" id="Q2NRV7"/>
<dbReference type="STRING" id="343509.SG1843"/>
<dbReference type="KEGG" id="sgl:SG1843"/>
<dbReference type="eggNOG" id="COG0223">
    <property type="taxonomic scope" value="Bacteria"/>
</dbReference>
<dbReference type="eggNOG" id="COG0451">
    <property type="taxonomic scope" value="Bacteria"/>
</dbReference>
<dbReference type="HOGENOM" id="CLU_007383_23_2_6"/>
<dbReference type="OrthoDB" id="9802815at2"/>
<dbReference type="UniPathway" id="UPA00030"/>
<dbReference type="UniPathway" id="UPA00032">
    <property type="reaction ID" value="UER00492"/>
</dbReference>
<dbReference type="UniPathway" id="UPA00032">
    <property type="reaction ID" value="UER00494"/>
</dbReference>
<dbReference type="Proteomes" id="UP000001932">
    <property type="component" value="Chromosome"/>
</dbReference>
<dbReference type="GO" id="GO:0016020">
    <property type="term" value="C:membrane"/>
    <property type="evidence" value="ECO:0007669"/>
    <property type="project" value="GOC"/>
</dbReference>
<dbReference type="GO" id="GO:0016831">
    <property type="term" value="F:carboxy-lyase activity"/>
    <property type="evidence" value="ECO:0007669"/>
    <property type="project" value="InterPro"/>
</dbReference>
<dbReference type="GO" id="GO:0099619">
    <property type="term" value="F:UDP-4-amino-4-deoxy-L-arabinose formyltransferase activity"/>
    <property type="evidence" value="ECO:0007669"/>
    <property type="project" value="UniProtKB-EC"/>
</dbReference>
<dbReference type="GO" id="GO:0099618">
    <property type="term" value="F:UDP-glucuronate dehydrogenase activity"/>
    <property type="evidence" value="ECO:0007669"/>
    <property type="project" value="UniProtKB-EC"/>
</dbReference>
<dbReference type="GO" id="GO:0009245">
    <property type="term" value="P:lipid A biosynthetic process"/>
    <property type="evidence" value="ECO:0007669"/>
    <property type="project" value="UniProtKB-KW"/>
</dbReference>
<dbReference type="GO" id="GO:0009103">
    <property type="term" value="P:lipopolysaccharide biosynthetic process"/>
    <property type="evidence" value="ECO:0007669"/>
    <property type="project" value="UniProtKB-UniRule"/>
</dbReference>
<dbReference type="GO" id="GO:0046677">
    <property type="term" value="P:response to antibiotic"/>
    <property type="evidence" value="ECO:0007669"/>
    <property type="project" value="UniProtKB-KW"/>
</dbReference>
<dbReference type="CDD" id="cd08702">
    <property type="entry name" value="Arna_FMT_C"/>
    <property type="match status" value="1"/>
</dbReference>
<dbReference type="CDD" id="cd05257">
    <property type="entry name" value="Arna_like_SDR_e"/>
    <property type="match status" value="1"/>
</dbReference>
<dbReference type="FunFam" id="3.40.50.720:FF:000197">
    <property type="entry name" value="Bifunctional polymyxin resistance protein ArnA"/>
    <property type="match status" value="1"/>
</dbReference>
<dbReference type="Gene3D" id="3.40.50.12230">
    <property type="match status" value="1"/>
</dbReference>
<dbReference type="Gene3D" id="3.40.50.720">
    <property type="entry name" value="NAD(P)-binding Rossmann-like Domain"/>
    <property type="match status" value="1"/>
</dbReference>
<dbReference type="HAMAP" id="MF_01166">
    <property type="entry name" value="ArnA"/>
    <property type="match status" value="1"/>
</dbReference>
<dbReference type="InterPro" id="IPR045869">
    <property type="entry name" value="Arna-like_SDR_e"/>
</dbReference>
<dbReference type="InterPro" id="IPR021168">
    <property type="entry name" value="Bifun_polymyxin_resist_ArnA"/>
</dbReference>
<dbReference type="InterPro" id="IPR001509">
    <property type="entry name" value="Epimerase_deHydtase"/>
</dbReference>
<dbReference type="InterPro" id="IPR005793">
    <property type="entry name" value="Formyl_trans_C"/>
</dbReference>
<dbReference type="InterPro" id="IPR002376">
    <property type="entry name" value="Formyl_transf_N"/>
</dbReference>
<dbReference type="InterPro" id="IPR036477">
    <property type="entry name" value="Formyl_transf_N_sf"/>
</dbReference>
<dbReference type="InterPro" id="IPR011034">
    <property type="entry name" value="Formyl_transferase-like_C_sf"/>
</dbReference>
<dbReference type="InterPro" id="IPR050177">
    <property type="entry name" value="Lipid_A_modif_metabolic_enz"/>
</dbReference>
<dbReference type="InterPro" id="IPR036291">
    <property type="entry name" value="NAD(P)-bd_dom_sf"/>
</dbReference>
<dbReference type="NCBIfam" id="NF005414">
    <property type="entry name" value="PRK06988.1"/>
    <property type="match status" value="1"/>
</dbReference>
<dbReference type="NCBIfam" id="NF005998">
    <property type="entry name" value="PRK08125.1"/>
    <property type="match status" value="1"/>
</dbReference>
<dbReference type="NCBIfam" id="NF008872">
    <property type="entry name" value="PRK11908.1"/>
    <property type="match status" value="1"/>
</dbReference>
<dbReference type="PANTHER" id="PTHR43245">
    <property type="entry name" value="BIFUNCTIONAL POLYMYXIN RESISTANCE PROTEIN ARNA"/>
    <property type="match status" value="1"/>
</dbReference>
<dbReference type="PANTHER" id="PTHR43245:SF13">
    <property type="entry name" value="UDP-D-APIOSE_UDP-D-XYLOSE SYNTHASE 2"/>
    <property type="match status" value="1"/>
</dbReference>
<dbReference type="Pfam" id="PF01370">
    <property type="entry name" value="Epimerase"/>
    <property type="match status" value="1"/>
</dbReference>
<dbReference type="Pfam" id="PF02911">
    <property type="entry name" value="Formyl_trans_C"/>
    <property type="match status" value="1"/>
</dbReference>
<dbReference type="Pfam" id="PF00551">
    <property type="entry name" value="Formyl_trans_N"/>
    <property type="match status" value="1"/>
</dbReference>
<dbReference type="PIRSF" id="PIRSF036506">
    <property type="entry name" value="Bifun_polymyxin_resist_ArnA"/>
    <property type="match status" value="1"/>
</dbReference>
<dbReference type="SUPFAM" id="SSF50486">
    <property type="entry name" value="FMT C-terminal domain-like"/>
    <property type="match status" value="1"/>
</dbReference>
<dbReference type="SUPFAM" id="SSF53328">
    <property type="entry name" value="Formyltransferase"/>
    <property type="match status" value="1"/>
</dbReference>
<dbReference type="SUPFAM" id="SSF51735">
    <property type="entry name" value="NAD(P)-binding Rossmann-fold domains"/>
    <property type="match status" value="1"/>
</dbReference>
<accession>Q2NRV7</accession>
<protein>
    <recommendedName>
        <fullName evidence="1">Bifunctional polymyxin resistance protein ArnA</fullName>
    </recommendedName>
    <domain>
        <recommendedName>
            <fullName evidence="1">UDP-4-amino-4-deoxy-L-arabinose formyltransferase</fullName>
            <ecNumber evidence="1">2.1.2.13</ecNumber>
        </recommendedName>
        <alternativeName>
            <fullName evidence="1">ArnAFT</fullName>
        </alternativeName>
        <alternativeName>
            <fullName evidence="1">UDP-L-Ara4N formyltransferase</fullName>
        </alternativeName>
    </domain>
    <domain>
        <recommendedName>
            <fullName evidence="1">UDP-glucuronic acid oxidase, UDP-4-keto-hexauronic acid decarboxylating</fullName>
            <ecNumber evidence="1">1.1.1.305</ecNumber>
        </recommendedName>
        <alternativeName>
            <fullName evidence="1">ArnADH</fullName>
        </alternativeName>
        <alternativeName>
            <fullName evidence="1">UDP-GlcUA decarboxylase</fullName>
        </alternativeName>
        <alternativeName>
            <fullName evidence="1">UDP-glucuronic acid dehydrogenase</fullName>
        </alternativeName>
    </domain>
</protein>
<sequence>MKAVIFAYHDMGCVGVTALINAGYTIEAIITHPDAPSEKTFFGSVARIAAEHNIPVFVPDDVNHPLWIARIKALAPDVIFSFYYRQLLCQDILSLPTVGAFNLHGSLLPRYRGRSPLNWVLVNGEQETGVTLHRMTARADAGAILAQRSVAITLQDDALTLHRKLCEAAAGVLEKVLPAIREQRCTETPQDESIASYVGHRTPEDGRIDWGQPAATLANLVRAVTDPWPGAFSYAGGEKFIIWKAQVRPNSADAQPGTVLSIDPLVIACGSDALEVQTGQSQQGVYMQGGQLAHALGLVKGALLNPRPLVSHKRRTRVLILGVNGFIGNHLTERLLRDGNYEIYGLDIGTDAISRFMVNPLFHFVEGDISIHSEWIEYHIKKCDIVLPLVAIATPIEYTRNPLRVFELDFEENLKIIRHCVKYQKRIIFPSTSEVYGMCTDPVFDEDDSSLIVGPINKQRWIYSVSKQLLDRVLWAYGEKEGLRFTLFRPFNWMGPRLDNLNAARIGSSRAITQLILNLVEGSHIKLVDGGAQKRCFTDISDGIEALFRIIENKDNNCDGQIINIGNPDNEASIRQLAELLLASFERHPLRQHFPPFAGFRDVESSSYYGKGYQDVEHRKPSIRNAKRLLGWAPSVPMAQTIDETLDFFLQTVDLPDAAQ</sequence>
<proteinExistence type="inferred from homology"/>